<name>KDSB_YERPA</name>
<evidence type="ECO:0000255" key="1">
    <source>
        <dbReference type="HAMAP-Rule" id="MF_00057"/>
    </source>
</evidence>
<proteinExistence type="inferred from homology"/>
<feature type="chain" id="PRO_1000003391" description="3-deoxy-manno-octulosonate cytidylyltransferase">
    <location>
        <begin position="1"/>
        <end position="250"/>
    </location>
</feature>
<reference key="1">
    <citation type="journal article" date="2006" name="J. Bacteriol.">
        <title>Complete genome sequence of Yersinia pestis strains Antiqua and Nepal516: evidence of gene reduction in an emerging pathogen.</title>
        <authorList>
            <person name="Chain P.S.G."/>
            <person name="Hu P."/>
            <person name="Malfatti S.A."/>
            <person name="Radnedge L."/>
            <person name="Larimer F."/>
            <person name="Vergez L.M."/>
            <person name="Worsham P."/>
            <person name="Chu M.C."/>
            <person name="Andersen G.L."/>
        </authorList>
    </citation>
    <scope>NUCLEOTIDE SEQUENCE [LARGE SCALE GENOMIC DNA]</scope>
    <source>
        <strain>Antiqua</strain>
    </source>
</reference>
<comment type="function">
    <text evidence="1">Activates KDO (a required 8-carbon sugar) for incorporation into bacterial lipopolysaccharide in Gram-negative bacteria.</text>
</comment>
<comment type="catalytic activity">
    <reaction evidence="1">
        <text>3-deoxy-alpha-D-manno-oct-2-ulosonate + CTP = CMP-3-deoxy-beta-D-manno-octulosonate + diphosphate</text>
        <dbReference type="Rhea" id="RHEA:23448"/>
        <dbReference type="ChEBI" id="CHEBI:33019"/>
        <dbReference type="ChEBI" id="CHEBI:37563"/>
        <dbReference type="ChEBI" id="CHEBI:85986"/>
        <dbReference type="ChEBI" id="CHEBI:85987"/>
        <dbReference type="EC" id="2.7.7.38"/>
    </reaction>
</comment>
<comment type="pathway">
    <text evidence="1">Nucleotide-sugar biosynthesis; CMP-3-deoxy-D-manno-octulosonate biosynthesis; CMP-3-deoxy-D-manno-octulosonate from 3-deoxy-D-manno-octulosonate and CTP: step 1/1.</text>
</comment>
<comment type="pathway">
    <text evidence="1">Bacterial outer membrane biogenesis; lipopolysaccharide biosynthesis.</text>
</comment>
<comment type="subcellular location">
    <subcellularLocation>
        <location evidence="1">Cytoplasm</location>
    </subcellularLocation>
</comment>
<comment type="similarity">
    <text evidence="1">Belongs to the KdsB family.</text>
</comment>
<sequence>MSFIAIIPARYASTRLPGKPLADIAGKPMVVHVMERALASGADRVIVATDHPDVVKAVEAAGGEVCLTRADHQSGTERLAEVIEHYGFADDDIIVNVQGDEPLVPPVIIRQVADNLAACSAGMATLAVPIASSEEAFNPNAVKVVMDAQGYALYFSRATIPWERERFAQSKETIGDCFLRHIGIYAYRAGFIRRYVNWAPSQLEQIELLEQLRVLWYGEKIHVAVAKAVPAVGVDTQSDLDRVRAIMLNQ</sequence>
<keyword id="KW-0963">Cytoplasm</keyword>
<keyword id="KW-0448">Lipopolysaccharide biosynthesis</keyword>
<keyword id="KW-0548">Nucleotidyltransferase</keyword>
<keyword id="KW-0808">Transferase</keyword>
<accession>Q1CA60</accession>
<organism>
    <name type="scientific">Yersinia pestis bv. Antiqua (strain Antiqua)</name>
    <dbReference type="NCBI Taxonomy" id="360102"/>
    <lineage>
        <taxon>Bacteria</taxon>
        <taxon>Pseudomonadati</taxon>
        <taxon>Pseudomonadota</taxon>
        <taxon>Gammaproteobacteria</taxon>
        <taxon>Enterobacterales</taxon>
        <taxon>Yersiniaceae</taxon>
        <taxon>Yersinia</taxon>
    </lineage>
</organism>
<dbReference type="EC" id="2.7.7.38" evidence="1"/>
<dbReference type="EMBL" id="CP000308">
    <property type="protein sequence ID" value="ABG12662.1"/>
    <property type="molecule type" value="Genomic_DNA"/>
</dbReference>
<dbReference type="RefSeq" id="WP_002211314.1">
    <property type="nucleotide sequence ID" value="NZ_CP009906.1"/>
</dbReference>
<dbReference type="SMR" id="Q1CA60"/>
<dbReference type="GeneID" id="57977196"/>
<dbReference type="KEGG" id="ypa:YPA_0694"/>
<dbReference type="UniPathway" id="UPA00030"/>
<dbReference type="UniPathway" id="UPA00358">
    <property type="reaction ID" value="UER00476"/>
</dbReference>
<dbReference type="Proteomes" id="UP000001971">
    <property type="component" value="Chromosome"/>
</dbReference>
<dbReference type="GO" id="GO:0005829">
    <property type="term" value="C:cytosol"/>
    <property type="evidence" value="ECO:0007669"/>
    <property type="project" value="TreeGrafter"/>
</dbReference>
<dbReference type="GO" id="GO:0008690">
    <property type="term" value="F:3-deoxy-manno-octulosonate cytidylyltransferase activity"/>
    <property type="evidence" value="ECO:0007669"/>
    <property type="project" value="UniProtKB-UniRule"/>
</dbReference>
<dbReference type="GO" id="GO:0033468">
    <property type="term" value="P:CMP-keto-3-deoxy-D-manno-octulosonic acid biosynthetic process"/>
    <property type="evidence" value="ECO:0007669"/>
    <property type="project" value="UniProtKB-UniRule"/>
</dbReference>
<dbReference type="GO" id="GO:0009103">
    <property type="term" value="P:lipopolysaccharide biosynthetic process"/>
    <property type="evidence" value="ECO:0007669"/>
    <property type="project" value="UniProtKB-UniRule"/>
</dbReference>
<dbReference type="CDD" id="cd02517">
    <property type="entry name" value="CMP-KDO-Synthetase"/>
    <property type="match status" value="1"/>
</dbReference>
<dbReference type="FunFam" id="3.90.550.10:FF:000011">
    <property type="entry name" value="3-deoxy-manno-octulosonate cytidylyltransferase"/>
    <property type="match status" value="1"/>
</dbReference>
<dbReference type="Gene3D" id="3.90.550.10">
    <property type="entry name" value="Spore Coat Polysaccharide Biosynthesis Protein SpsA, Chain A"/>
    <property type="match status" value="1"/>
</dbReference>
<dbReference type="HAMAP" id="MF_00057">
    <property type="entry name" value="KdsB"/>
    <property type="match status" value="1"/>
</dbReference>
<dbReference type="InterPro" id="IPR003329">
    <property type="entry name" value="Cytidylyl_trans"/>
</dbReference>
<dbReference type="InterPro" id="IPR004528">
    <property type="entry name" value="KdsB"/>
</dbReference>
<dbReference type="InterPro" id="IPR029044">
    <property type="entry name" value="Nucleotide-diphossugar_trans"/>
</dbReference>
<dbReference type="NCBIfam" id="TIGR00466">
    <property type="entry name" value="kdsB"/>
    <property type="match status" value="1"/>
</dbReference>
<dbReference type="NCBIfam" id="NF003950">
    <property type="entry name" value="PRK05450.1-3"/>
    <property type="match status" value="1"/>
</dbReference>
<dbReference type="NCBIfam" id="NF003952">
    <property type="entry name" value="PRK05450.1-5"/>
    <property type="match status" value="1"/>
</dbReference>
<dbReference type="NCBIfam" id="NF009905">
    <property type="entry name" value="PRK13368.1"/>
    <property type="match status" value="1"/>
</dbReference>
<dbReference type="PANTHER" id="PTHR42866">
    <property type="entry name" value="3-DEOXY-MANNO-OCTULOSONATE CYTIDYLYLTRANSFERASE"/>
    <property type="match status" value="1"/>
</dbReference>
<dbReference type="PANTHER" id="PTHR42866:SF2">
    <property type="entry name" value="3-DEOXY-MANNO-OCTULOSONATE CYTIDYLYLTRANSFERASE, MITOCHONDRIAL"/>
    <property type="match status" value="1"/>
</dbReference>
<dbReference type="Pfam" id="PF02348">
    <property type="entry name" value="CTP_transf_3"/>
    <property type="match status" value="1"/>
</dbReference>
<dbReference type="SUPFAM" id="SSF53448">
    <property type="entry name" value="Nucleotide-diphospho-sugar transferases"/>
    <property type="match status" value="1"/>
</dbReference>
<protein>
    <recommendedName>
        <fullName evidence="1">3-deoxy-manno-octulosonate cytidylyltransferase</fullName>
        <ecNumber evidence="1">2.7.7.38</ecNumber>
    </recommendedName>
    <alternativeName>
        <fullName evidence="1">CMP-2-keto-3-deoxyoctulosonic acid synthase</fullName>
        <shortName evidence="1">CKS</shortName>
        <shortName evidence="1">CMP-KDO synthase</shortName>
    </alternativeName>
</protein>
<gene>
    <name evidence="1" type="primary">kdsB</name>
    <name type="ordered locus">YPA_0694</name>
</gene>